<accession>D0EM77</accession>
<protein>
    <recommendedName>
        <fullName>Karilysin</fullName>
        <ecNumber>3.4.24.-</ecNumber>
    </recommendedName>
    <alternativeName>
        <fullName>Matrix metalloprotease-like enzyme</fullName>
        <shortName>MMP-like enzyme</shortName>
    </alternativeName>
    <component>
        <recommendedName>
            <fullName>Karilysin long form Kly38</fullName>
        </recommendedName>
    </component>
    <component>
        <recommendedName>
            <fullName>Karilysin short form Kly18</fullName>
        </recommendedName>
    </component>
</protein>
<reference key="1">
    <citation type="journal article" date="2010" name="Biol. Chem.">
        <title>A novel matrix metalloprotease-like enzyme (karilysin) of the periodontal pathogen Tannerella forsythia ATCC 43037.</title>
        <authorList>
            <person name="Karim A.Y."/>
            <person name="Kulczycka M."/>
            <person name="Kantyka T."/>
            <person name="Dubin G."/>
            <person name="Jabaiah A."/>
            <person name="Daugherty P.S."/>
            <person name="Thogersen I.B."/>
            <person name="Enghild J.J."/>
            <person name="Nguyen K.A."/>
            <person name="Potempa J."/>
        </authorList>
    </citation>
    <scope>NUCLEOTIDE SEQUENCE [GENOMIC DNA]</scope>
    <scope>SEQUENCE REVISION</scope>
    <scope>PARTIAL PROTEIN SEQUENCE</scope>
    <scope>FUNCTION</scope>
    <scope>CATALYTIC ACTIVITY</scope>
    <scope>SUBSTRATE SPECIFICITY</scope>
    <scope>ACTIVITY REGULATION</scope>
    <scope>IDENTIFICATION BY MASS SPECTROMETRY</scope>
    <scope>AUTOCATALYTIC CLEAVAGE</scope>
    <scope>BIOPHYSICOCHEMICAL PROPERTIES</scope>
    <scope>MUTAGENESIS OF TYR-35 AND GLU-156</scope>
    <source>
        <strain>ATCC 43037 / JCM 10827 / CCUG 21028 A / KCTC 5666 / FDC 338</strain>
    </source>
</reference>
<reference key="2">
    <citation type="submission" date="2011-12" db="EMBL/GenBank/DDBJ databases">
        <title>Complete sequence of Tannerella forsythia ATCC 43037.</title>
        <authorList>
            <person name="Dewhirst F."/>
            <person name="Tanner A."/>
            <person name="Izard J."/>
            <person name="Brinkac L."/>
            <person name="Durkin A.S."/>
            <person name="Hostetler J."/>
            <person name="Shetty J."/>
            <person name="Torralba M."/>
            <person name="Gill S."/>
            <person name="Nelson K."/>
        </authorList>
    </citation>
    <scope>NUCLEOTIDE SEQUENCE [LARGE SCALE GENOMIC DNA]</scope>
    <source>
        <strain>ATCC 43037 / JCM 10827 / CCUG 21028 A / KCTC 5666 / FDC 338</strain>
    </source>
</reference>
<reference key="3">
    <citation type="journal article" date="2010" name="J. Innate Immun.">
        <title>Proteolytic inactivation of LL-37 by karilysin, a novel virulence mechanism of Tannerella forsythia.</title>
        <authorList>
            <person name="Koziel J."/>
            <person name="Karim A.Y."/>
            <person name="Przybyszewska K."/>
            <person name="Ksiazek M."/>
            <person name="Rapala-Kozik M."/>
            <person name="Nguyen K.A."/>
            <person name="Potempa J."/>
        </authorList>
    </citation>
    <scope>FUNCTION</scope>
    <source>
        <strain>ATCC 43037 / JCM 10827 / CCUG 21028 A / KCTC 5666 / FDC 338</strain>
    </source>
</reference>
<reference key="4">
    <citation type="journal article" date="2012" name="J. Immunol.">
        <title>A metalloproteinase karilysin present in the majority of Tannerella forsythia isolates inhibits all pathways of the complement system.</title>
        <authorList>
            <person name="Jusko M."/>
            <person name="Potempa J."/>
            <person name="Karim A.Y."/>
            <person name="Ksiazek M."/>
            <person name="Riesbeck K."/>
            <person name="Garred P."/>
            <person name="Eick S."/>
            <person name="Blom A.M."/>
        </authorList>
    </citation>
    <scope>FUNCTION</scope>
    <scope>GENE NAME</scope>
    <scope>MUTAGENESIS OF GLU-156</scope>
    <source>
        <strain>ATCC 43037 / JCM 10827 / CCUG 21028 A / KCTC 5666 / FDC 338</strain>
    </source>
</reference>
<reference key="5">
    <citation type="journal article" date="2012" name="PLoS ONE">
        <title>A phage display selected 7-mer peptide inhibitor of the Tannerella forsythia metalloprotease-like enzyme Karilysin can be truncated to Ser-Trp-Phe-Pro.</title>
        <authorList>
            <person name="Skottrup P.D."/>
            <person name="Sorensen G."/>
            <person name="Ksiazek M."/>
            <person name="Potempa J."/>
            <person name="Riise E."/>
        </authorList>
    </citation>
    <scope>ACTIVITY REGULATION</scope>
    <scope>INHIBITOR STUDIES</scope>
    <source>
        <strain>ATCC 43037 / JCM 10827 / CCUG 21028 A / KCTC 5666 / FDC 338</strain>
    </source>
</reference>
<reference key="6">
    <citation type="journal article" date="2011" name="Mol. Microbiol.">
        <title>The structure of the catalytic domain of Tannerella forsythia karilysin reveals it is a bacterial xenologue of animal matrix metalloproteinases.</title>
        <authorList>
            <person name="Cerda-Costa N."/>
            <person name="Guevara T."/>
            <person name="Karim A.Y."/>
            <person name="Ksiazek M."/>
            <person name="Nguyen K.A."/>
            <person name="Arolas J.L."/>
            <person name="Potempa J."/>
            <person name="Gomis-Ruth F.X."/>
        </authorList>
    </citation>
    <scope>X-RAY CRYSTALLOGRAPHY (1.70 ANGSTROMS) OF 35-201 IN COMPLEX WITH ZINC AND A TRIPEPTIDE</scope>
    <scope>FUNCTION</scope>
    <scope>CATALYTIC ACTIVITY</scope>
    <scope>COFACTOR</scope>
    <scope>ACTIVE SITE</scope>
    <source>
        <strain>ATCC 43037 / JCM 10827 / CCUG 21028 A / KCTC 5666 / FDC 338</strain>
    </source>
</reference>
<reference key="7">
    <citation type="journal article" date="2013" name="Acta Crystallogr. F">
        <title>Structure of the catalytic domain of the Tannerella forsythia matrix metallopeptidase karilysin in complex with a tetrapeptidic inhibitor.</title>
        <authorList>
            <person name="Guevara T."/>
            <person name="Ksiazek M."/>
            <person name="Skottrup P.D."/>
            <person name="Cerda-Costa N."/>
            <person name="Trillo-Muyo S."/>
            <person name="de Diego I."/>
            <person name="Riise E."/>
            <person name="Potempa J."/>
            <person name="Gomis-Ruth F.X."/>
        </authorList>
    </citation>
    <scope>X-RAY CRYSTALLOGRAPHY (1.55 ANGSTROMS) OF 35-200 IN COMPLEX WITH ZINC AND A TETRAPEPTIDIC INHIBITOR</scope>
    <scope>COFACTOR</scope>
    <scope>ACTIVE SITE</scope>
    <source>
        <strain>ATCC 43037 / JCM 10827 / CCUG 21028 A / KCTC 5666 / FDC 338</strain>
    </source>
</reference>
<name>KLY_TANFA</name>
<gene>
    <name type="primary">kly</name>
    <name type="ordered locus">BFO_2683</name>
</gene>
<dbReference type="EC" id="3.4.24.-"/>
<dbReference type="EMBL" id="GQ856797">
    <property type="protein sequence ID" value="ACW82491.1"/>
    <property type="molecule type" value="Genomic_DNA"/>
</dbReference>
<dbReference type="EMBL" id="CP003191">
    <property type="status" value="NOT_ANNOTATED_CDS"/>
    <property type="molecule type" value="Genomic_DNA"/>
</dbReference>
<dbReference type="PDB" id="2XS3">
    <property type="method" value="X-ray"/>
    <property type="resolution" value="2.40 A"/>
    <property type="chains" value="A/B=35-200"/>
</dbReference>
<dbReference type="PDB" id="2XS4">
    <property type="method" value="X-ray"/>
    <property type="resolution" value="1.70 A"/>
    <property type="chains" value="A=35-201"/>
</dbReference>
<dbReference type="PDB" id="4IN9">
    <property type="method" value="X-ray"/>
    <property type="resolution" value="1.55 A"/>
    <property type="chains" value="A=35-200"/>
</dbReference>
<dbReference type="PDB" id="4R3V">
    <property type="method" value="X-ray"/>
    <property type="resolution" value="2.01 A"/>
    <property type="chains" value="A/B=21-201"/>
</dbReference>
<dbReference type="PDB" id="8B2Q">
    <property type="method" value="X-ray"/>
    <property type="resolution" value="1.35 A"/>
    <property type="chains" value="A=35-200"/>
</dbReference>
<dbReference type="PDBsum" id="2XS3"/>
<dbReference type="PDBsum" id="2XS4"/>
<dbReference type="PDBsum" id="4IN9"/>
<dbReference type="PDBsum" id="4R3V"/>
<dbReference type="PDBsum" id="8B2Q"/>
<dbReference type="SMR" id="D0EM77"/>
<dbReference type="STRING" id="203275.BFO_0703"/>
<dbReference type="MEROPS" id="M10.066"/>
<dbReference type="TCDB" id="8.B.14.2.4">
    <property type="family name" value="the sea anemone peptide toxin, class 1 (bgk) family"/>
</dbReference>
<dbReference type="eggNOG" id="COG0265">
    <property type="taxonomic scope" value="Bacteria"/>
</dbReference>
<dbReference type="eggNOG" id="COG5549">
    <property type="taxonomic scope" value="Bacteria"/>
</dbReference>
<dbReference type="EvolutionaryTrace" id="D0EM77"/>
<dbReference type="Proteomes" id="UP000005436">
    <property type="component" value="Chromosome"/>
</dbReference>
<dbReference type="GO" id="GO:0031012">
    <property type="term" value="C:extracellular matrix"/>
    <property type="evidence" value="ECO:0007669"/>
    <property type="project" value="InterPro"/>
</dbReference>
<dbReference type="GO" id="GO:0005576">
    <property type="term" value="C:extracellular region"/>
    <property type="evidence" value="ECO:0007669"/>
    <property type="project" value="UniProtKB-SubCell"/>
</dbReference>
<dbReference type="GO" id="GO:0004222">
    <property type="term" value="F:metalloendopeptidase activity"/>
    <property type="evidence" value="ECO:0007669"/>
    <property type="project" value="InterPro"/>
</dbReference>
<dbReference type="GO" id="GO:0008270">
    <property type="term" value="F:zinc ion binding"/>
    <property type="evidence" value="ECO:0007669"/>
    <property type="project" value="InterPro"/>
</dbReference>
<dbReference type="GO" id="GO:0030574">
    <property type="term" value="P:collagen catabolic process"/>
    <property type="evidence" value="ECO:0007669"/>
    <property type="project" value="TreeGrafter"/>
</dbReference>
<dbReference type="GO" id="GO:0030198">
    <property type="term" value="P:extracellular matrix organization"/>
    <property type="evidence" value="ECO:0007669"/>
    <property type="project" value="TreeGrafter"/>
</dbReference>
<dbReference type="GO" id="GO:0006508">
    <property type="term" value="P:proteolysis"/>
    <property type="evidence" value="ECO:0007669"/>
    <property type="project" value="UniProtKB-KW"/>
</dbReference>
<dbReference type="CDD" id="cd04278">
    <property type="entry name" value="ZnMc_MMP"/>
    <property type="match status" value="1"/>
</dbReference>
<dbReference type="Gene3D" id="2.60.40.1080">
    <property type="match status" value="1"/>
</dbReference>
<dbReference type="Gene3D" id="3.40.390.10">
    <property type="entry name" value="Collagenase (Catalytic Domain)"/>
    <property type="match status" value="1"/>
</dbReference>
<dbReference type="InterPro" id="IPR008964">
    <property type="entry name" value="Invasin/intimin_cell_adhesion"/>
</dbReference>
<dbReference type="InterPro" id="IPR033739">
    <property type="entry name" value="M10A_MMP"/>
</dbReference>
<dbReference type="InterPro" id="IPR024079">
    <property type="entry name" value="MetalloPept_cat_dom_sf"/>
</dbReference>
<dbReference type="InterPro" id="IPR001818">
    <property type="entry name" value="Pept_M10_metallopeptidase"/>
</dbReference>
<dbReference type="InterPro" id="IPR021190">
    <property type="entry name" value="Pept_M10A"/>
</dbReference>
<dbReference type="InterPro" id="IPR006026">
    <property type="entry name" value="Peptidase_Metallo"/>
</dbReference>
<dbReference type="InterPro" id="IPR026444">
    <property type="entry name" value="Secre_tail"/>
</dbReference>
<dbReference type="NCBIfam" id="TIGR04183">
    <property type="entry name" value="Por_Secre_tail"/>
    <property type="match status" value="1"/>
</dbReference>
<dbReference type="PANTHER" id="PTHR10201">
    <property type="entry name" value="MATRIX METALLOPROTEINASE"/>
    <property type="match status" value="1"/>
</dbReference>
<dbReference type="PANTHER" id="PTHR10201:SF291">
    <property type="entry name" value="MATRIX METALLOPROTEINASE 1, ISOFORM C-RELATED"/>
    <property type="match status" value="1"/>
</dbReference>
<dbReference type="Pfam" id="PF00413">
    <property type="entry name" value="Peptidase_M10"/>
    <property type="match status" value="1"/>
</dbReference>
<dbReference type="Pfam" id="PF18962">
    <property type="entry name" value="Por_Secre_tail"/>
    <property type="match status" value="1"/>
</dbReference>
<dbReference type="PRINTS" id="PR00138">
    <property type="entry name" value="MATRIXIN"/>
</dbReference>
<dbReference type="SMART" id="SM00235">
    <property type="entry name" value="ZnMc"/>
    <property type="match status" value="1"/>
</dbReference>
<dbReference type="SUPFAM" id="SSF49373">
    <property type="entry name" value="Invasin/intimin cell-adhesion fragments"/>
    <property type="match status" value="1"/>
</dbReference>
<dbReference type="SUPFAM" id="SSF55486">
    <property type="entry name" value="Metalloproteases ('zincins'), catalytic domain"/>
    <property type="match status" value="1"/>
</dbReference>
<dbReference type="PROSITE" id="PS00142">
    <property type="entry name" value="ZINC_PROTEASE"/>
    <property type="match status" value="1"/>
</dbReference>
<evidence type="ECO:0000255" key="1"/>
<evidence type="ECO:0000255" key="2">
    <source>
        <dbReference type="PROSITE-ProRule" id="PRU10095"/>
    </source>
</evidence>
<evidence type="ECO:0000269" key="3">
    <source>
    </source>
</evidence>
<evidence type="ECO:0000269" key="4">
    <source>
    </source>
</evidence>
<evidence type="ECO:0000269" key="5">
    <source>
    </source>
</evidence>
<evidence type="ECO:0000269" key="6">
    <source>
    </source>
</evidence>
<evidence type="ECO:0000269" key="7">
    <source>
    </source>
</evidence>
<evidence type="ECO:0000269" key="8">
    <source>
    </source>
</evidence>
<evidence type="ECO:0000305" key="9"/>
<evidence type="ECO:0000305" key="10">
    <source>
    </source>
</evidence>
<evidence type="ECO:0007829" key="11">
    <source>
        <dbReference type="PDB" id="4IN9"/>
    </source>
</evidence>
<evidence type="ECO:0007829" key="12">
    <source>
        <dbReference type="PDB" id="4R3V"/>
    </source>
</evidence>
<evidence type="ECO:0007829" key="13">
    <source>
        <dbReference type="PDB" id="8B2Q"/>
    </source>
</evidence>
<comment type="function">
    <text evidence="3 4 5 6">Metalloprotease able to cleave casein, gelatin, elastin, fibrinogen and fibronectin. Shows exclusive preference for hydrophobic residues, especially Leu, Tyr and Met, at the P1' position of substrates, and for Pro or Ala at P3. Can efficiently cleave the antimicrobial peptide LL-37 which is a component of the immune system, leading to a significant reduction of its bactericidal activity. Is also able to inhibit all pathways of the human complement system. The classical and lectin complement pathways are inhibited because of the efficient degradation of mannose-binding lectin, ficolin-2, ficolin-3, and C4 by karilysin, whereas inhibition of the terminal pathway is caused by cleavage of C5. Thus, karilysin appears to be a major virulence factor of T.forsythia that contributes to evasion of the human immune response and periodontal disease. Seems to act synergistically with gingipains from the periodontal pathogen P.gingivalis present at the same sites of infection.</text>
</comment>
<comment type="cofactor">
    <cofactor evidence="5 8">
        <name>Zn(2+)</name>
        <dbReference type="ChEBI" id="CHEBI:29105"/>
    </cofactor>
    <text evidence="5 8">Binds 2 Zn(2+) ions per subunit.</text>
</comment>
<comment type="activity regulation">
    <text evidence="3 7">Autoprocessing and proteolytic activity are completely inhibited by EDTA and 1,10-phenanthroline in vitro. Proteolytic activity is 3-fold enhanced by Ca(2+) due to stabilization of the protein structure but inhibited by an excess of Zn(2+) (PubMed:19919176). Inhibitory studies of karilysin identified several phage display-selected peptides with apparent inhibition constants (Ki) in the micromolar range, among which is the tetrapeptide SWFP (Ki=10.7 uM) (PubMed:23119051).</text>
</comment>
<comment type="biophysicochemical properties">
    <phDependence>
        <text evidence="3">Optimum pH is 8 for casein degradation. Active in the broad pH range from 6.5 to 8.5.</text>
    </phDependence>
    <temperatureDependence>
        <text evidence="3">In the presence of CaCl(2), the enzyme is fully stable for up to 40 minutes at 70 degrees Celsius, whereas karilysin incubated without calcium loses 50% of its activity within 30 minutes.</text>
    </temperatureDependence>
</comment>
<comment type="subcellular location">
    <subcellularLocation>
        <location evidence="9">Secreted</location>
    </subcellularLocation>
</comment>
<comment type="PTM">
    <text>Processes itself into the mature 18-kDa enzyme (Kly18) through sequential autoproteolytic cleavage at both the N- and C-termini. However, the maturation intermediate Kly38 is found to be more active than Kly18 and the rate for its processing is slow, which raises the question as to whether Kly38 is a physiologically relevant entity.</text>
</comment>
<comment type="similarity">
    <text evidence="9">Belongs to the peptidase M10A family.</text>
</comment>
<comment type="caution">
    <text evidence="10">Sequence submitted to GenBank under accession ACW82491.1 does not completely correspond to the one described in the related article, which is the correct one.</text>
</comment>
<comment type="sequence caution" evidence="9">
    <conflict type="frameshift">
        <sequence resource="EMBL" id="CP003191"/>
    </conflict>
</comment>
<comment type="sequence caution" evidence="9">
    <conflict type="miscellaneous discrepancy">
        <sequence resource="EMBL" id="CP003191"/>
    </conflict>
    <text>Region of major discrepancy (238-386) presumably comes from incorrect genome shotgun sequence assembly of homologous regions with other proteases.</text>
</comment>
<organism>
    <name type="scientific">Tannerella forsythia (strain ATCC 43037 / JCM 10827 / CCUG 21028 A / KCTC 5666 / FDC 338)</name>
    <name type="common">Bacteroides forsythus</name>
    <dbReference type="NCBI Taxonomy" id="203275"/>
    <lineage>
        <taxon>Bacteria</taxon>
        <taxon>Pseudomonadati</taxon>
        <taxon>Bacteroidota</taxon>
        <taxon>Bacteroidia</taxon>
        <taxon>Bacteroidales</taxon>
        <taxon>Tannerellaceae</taxon>
        <taxon>Tannerella</taxon>
    </lineage>
</organism>
<proteinExistence type="evidence at protein level"/>
<sequence>MKRFILLFFLSTIAIFKVYSQRLYDNGPLTGDNNYVLQGSKWNKTTLKYYIYNSSSHLTTTERENAIRSAFALWSDKSTLSFIQVYNPNQADIKIKWEKGNHGDGYPFDGNTGILAHAFYPPPAGGNYAGHLHFDGDENWSINGSGIDLITVAAHEIGHLLGIEHSNVSSALMYPYYTGIKRQLDNDDCLAVWDLYGYPFSISGPSSVCDQATYTVENLLSGATVQWSVSNPNIATINSSNGVLTCRGNGICEVRATINNSSVALTPLKICLGTPISQDITLTVESLNSNGTLCTDNPNAIMADHPGGNHLGYIREYEWRISNGWQIAHHPGDNGIYADHFIVTVIPLSPLPGSPTVSVRARSECGWGTWKEVQIPAVSCSRTISPFTLSPNPATDEVILQLMETDEVSGLSVLSTDRSAYEIQIWSGMRMLRSFRTNEPTFQISMTGLPAGLYFVRVVKNGQTYTQKLIKK</sequence>
<feature type="signal peptide" evidence="1">
    <location>
        <begin position="1"/>
        <end position="20"/>
    </location>
</feature>
<feature type="propeptide" id="PRO_0000425866" description="Activation peptide">
    <location>
        <begin position="21"/>
        <end position="34"/>
    </location>
</feature>
<feature type="chain" id="PRO_0000425867" description="Karilysin long form Kly38">
    <location>
        <begin position="35"/>
        <end position="386"/>
    </location>
</feature>
<feature type="chain" id="PRO_0000425868" description="Karilysin short form Kly18">
    <location>
        <begin position="35"/>
        <end position="195"/>
    </location>
</feature>
<feature type="propeptide" id="PRO_0000425869" description="Removed in short form">
    <location>
        <begin position="196"/>
        <end position="386"/>
    </location>
</feature>
<feature type="propeptide" id="PRO_0000425870" description="Removed in long form">
    <location>
        <begin position="387"/>
        <end position="472"/>
    </location>
</feature>
<feature type="active site" description="Proton donor/acceptor" evidence="2 5 8">
    <location>
        <position position="156"/>
    </location>
</feature>
<feature type="binding site" evidence="5 8">
    <location>
        <position position="102"/>
    </location>
    <ligand>
        <name>Zn(2+)</name>
        <dbReference type="ChEBI" id="CHEBI:29105"/>
        <label>1</label>
    </ligand>
</feature>
<feature type="binding site" evidence="5 8">
    <location>
        <position position="104"/>
    </location>
    <ligand>
        <name>Zn(2+)</name>
        <dbReference type="ChEBI" id="CHEBI:29105"/>
        <label>1</label>
    </ligand>
</feature>
<feature type="binding site" evidence="5 8">
    <location>
        <position position="117"/>
    </location>
    <ligand>
        <name>Zn(2+)</name>
        <dbReference type="ChEBI" id="CHEBI:29105"/>
        <label>1</label>
    </ligand>
</feature>
<feature type="binding site" evidence="5 8">
    <location>
        <position position="133"/>
    </location>
    <ligand>
        <name>Zn(2+)</name>
        <dbReference type="ChEBI" id="CHEBI:29105"/>
        <label>1</label>
    </ligand>
</feature>
<feature type="binding site" evidence="5 8">
    <location>
        <position position="155"/>
    </location>
    <ligand>
        <name>Zn(2+)</name>
        <dbReference type="ChEBI" id="CHEBI:29105"/>
        <label>2</label>
        <note>catalytic</note>
    </ligand>
</feature>
<feature type="binding site" evidence="5 8">
    <location>
        <position position="159"/>
    </location>
    <ligand>
        <name>Zn(2+)</name>
        <dbReference type="ChEBI" id="CHEBI:29105"/>
        <label>2</label>
        <note>catalytic</note>
    </ligand>
</feature>
<feature type="binding site" evidence="5 8">
    <location>
        <position position="165"/>
    </location>
    <ligand>
        <name>Zn(2+)</name>
        <dbReference type="ChEBI" id="CHEBI:29105"/>
        <label>2</label>
        <note>catalytic</note>
    </ligand>
</feature>
<feature type="mutagenesis site" description="Hinders generation of active enzyme and maturation process." evidence="3">
    <original>Y</original>
    <variation>A</variation>
    <location>
        <position position="35"/>
    </location>
</feature>
<feature type="mutagenesis site" description="Fails to autocatalytically process, to destroy the bactericidal activity of human serum and to inhibit all the complement pathways." evidence="3 6">
    <original>E</original>
    <variation>A</variation>
    <location>
        <position position="156"/>
    </location>
</feature>
<feature type="sequence conflict" description="In Ref. 1; ACW82491 and 2; CP003191." evidence="9" ref="1 2">
    <original>G</original>
    <variation>D</variation>
    <location>
        <position position="136"/>
    </location>
</feature>
<feature type="sequence conflict" description="In Ref. 2; CP003191." evidence="9" ref="2">
    <original>LS</original>
    <variation>PA</variation>
    <location>
        <begin position="220"/>
        <end position="221"/>
    </location>
</feature>
<feature type="sequence conflict" description="In Ref. 2; CP003191." evidence="9" ref="2">
    <original>TVQ</original>
    <variation>IVE</variation>
    <location>
        <begin position="224"/>
        <end position="226"/>
    </location>
</feature>
<feature type="sequence conflict" description="In Ref. 2; CP003191." evidence="9" ref="2">
    <original>I</original>
    <variation>V</variation>
    <location>
        <position position="234"/>
    </location>
</feature>
<feature type="sequence conflict" description="In Ref. 2; CP003191." evidence="9" ref="2">
    <original>EVI</original>
    <variation>AVT</variation>
    <location>
        <begin position="397"/>
        <end position="399"/>
    </location>
</feature>
<feature type="sequence conflict" description="In Ref. 2; CP003191." evidence="9" ref="2">
    <original>M</original>
    <variation>T</variation>
    <location>
        <position position="403"/>
    </location>
</feature>
<feature type="sequence conflict" description="In Ref. 2; CP003191." evidence="9" ref="2">
    <original>SA</original>
    <variation>TP</variation>
    <location>
        <begin position="419"/>
        <end position="420"/>
    </location>
</feature>
<feature type="sequence conflict" description="In Ref. 1; ACW82491." evidence="9" ref="1">
    <original>I</original>
    <variation>L</variation>
    <location>
        <position position="425"/>
    </location>
</feature>
<feature type="sequence conflict" description="In Ref. 1; ACW82491 and 2; CP003191." evidence="9" ref="1 2">
    <original>R</original>
    <variation>T</variation>
    <location>
        <position position="430"/>
    </location>
</feature>
<feature type="sequence conflict" description="In Ref. 1; ACW82491." evidence="9" ref="1">
    <original>N</original>
    <variation>D</variation>
    <location>
        <position position="438"/>
    </location>
</feature>
<feature type="sequence conflict" description="In Ref. 2; CP003191." evidence="9" ref="2">
    <original>Q</original>
    <variation>S</variation>
    <location>
        <position position="443"/>
    </location>
</feature>
<feature type="sequence conflict" description="In Ref. 1; ACW82491 and 2; CP003191." evidence="9" ref="1 2">
    <original>SMT</original>
    <variation>PMA</variation>
    <location>
        <begin position="445"/>
        <end position="447"/>
    </location>
</feature>
<feature type="sequence conflict" description="In Ref. 1; ACW82491 and 2; CP003191." evidence="9" ref="1 2">
    <original>N</original>
    <variation>D</variation>
    <location>
        <position position="461"/>
    </location>
</feature>
<feature type="turn" evidence="12">
    <location>
        <begin position="33"/>
        <end position="35"/>
    </location>
</feature>
<feature type="strand" evidence="13">
    <location>
        <begin position="45"/>
        <end position="51"/>
    </location>
</feature>
<feature type="strand" evidence="13">
    <location>
        <begin position="56"/>
        <end position="58"/>
    </location>
</feature>
<feature type="helix" evidence="13">
    <location>
        <begin position="60"/>
        <end position="75"/>
    </location>
</feature>
<feature type="strand" evidence="13">
    <location>
        <begin position="81"/>
        <end position="84"/>
    </location>
</feature>
<feature type="helix" evidence="13">
    <location>
        <begin position="88"/>
        <end position="90"/>
    </location>
</feature>
<feature type="strand" evidence="13">
    <location>
        <begin position="92"/>
        <end position="98"/>
    </location>
</feature>
<feature type="strand" evidence="13">
    <location>
        <begin position="103"/>
        <end position="105"/>
    </location>
</feature>
<feature type="strand" evidence="11">
    <location>
        <begin position="108"/>
        <end position="113"/>
    </location>
</feature>
<feature type="strand" evidence="13">
    <location>
        <begin position="116"/>
        <end position="118"/>
    </location>
</feature>
<feature type="turn" evidence="13">
    <location>
        <begin position="122"/>
        <end position="125"/>
    </location>
</feature>
<feature type="helix" evidence="13">
    <location>
        <begin position="126"/>
        <end position="128"/>
    </location>
</feature>
<feature type="strand" evidence="13">
    <location>
        <begin position="131"/>
        <end position="135"/>
    </location>
</feature>
<feature type="strand" evidence="13">
    <location>
        <begin position="140"/>
        <end position="148"/>
    </location>
</feature>
<feature type="helix" evidence="13">
    <location>
        <begin position="149"/>
        <end position="161"/>
    </location>
</feature>
<feature type="strand" evidence="13">
    <location>
        <begin position="174"/>
        <end position="176"/>
    </location>
</feature>
<feature type="helix" evidence="13">
    <location>
        <begin position="186"/>
        <end position="196"/>
    </location>
</feature>
<keyword id="KW-0002">3D-structure</keyword>
<keyword id="KW-0068">Autocatalytic cleavage</keyword>
<keyword id="KW-0903">Direct protein sequencing</keyword>
<keyword id="KW-0378">Hydrolase</keyword>
<keyword id="KW-0479">Metal-binding</keyword>
<keyword id="KW-0482">Metalloprotease</keyword>
<keyword id="KW-0645">Protease</keyword>
<keyword id="KW-1185">Reference proteome</keyword>
<keyword id="KW-0964">Secreted</keyword>
<keyword id="KW-0732">Signal</keyword>
<keyword id="KW-0843">Virulence</keyword>
<keyword id="KW-0862">Zinc</keyword>
<keyword id="KW-0865">Zymogen</keyword>